<comment type="function">
    <text evidence="1">May be a sulfotransferase involved in the formation of thiosulfate.</text>
</comment>
<comment type="catalytic activity">
    <reaction>
        <text>thiosulfate + hydrogen cyanide = thiocyanate + sulfite + 2 H(+)</text>
        <dbReference type="Rhea" id="RHEA:16881"/>
        <dbReference type="ChEBI" id="CHEBI:15378"/>
        <dbReference type="ChEBI" id="CHEBI:17359"/>
        <dbReference type="ChEBI" id="CHEBI:18022"/>
        <dbReference type="ChEBI" id="CHEBI:18407"/>
        <dbReference type="ChEBI" id="CHEBI:33542"/>
        <dbReference type="EC" id="2.8.1.1"/>
    </reaction>
</comment>
<comment type="domain">
    <text evidence="1">Contains two rhodanese domains with different primary structures but with near identical secondary structure conformations suggesting a common evolutionary origin. Only the C-terminal rhodanese domain contains the catalytic cysteine residue (By similarity).</text>
</comment>
<organism>
    <name type="scientific">Mycobacterium tuberculosis (strain CDC 1551 / Oshkosh)</name>
    <dbReference type="NCBI Taxonomy" id="83331"/>
    <lineage>
        <taxon>Bacteria</taxon>
        <taxon>Bacillati</taxon>
        <taxon>Actinomycetota</taxon>
        <taxon>Actinomycetes</taxon>
        <taxon>Mycobacteriales</taxon>
        <taxon>Mycobacteriaceae</taxon>
        <taxon>Mycobacterium</taxon>
        <taxon>Mycobacterium tuberculosis complex</taxon>
    </lineage>
</organism>
<name>THTR_MYCTO</name>
<evidence type="ECO:0000250" key="1"/>
<evidence type="ECO:0000255" key="2">
    <source>
        <dbReference type="PROSITE-ProRule" id="PRU00173"/>
    </source>
</evidence>
<dbReference type="EC" id="2.8.1.1"/>
<dbReference type="EMBL" id="AE000516">
    <property type="protein sequence ID" value="AAK45079.1"/>
    <property type="molecule type" value="Genomic_DNA"/>
</dbReference>
<dbReference type="EMBL" id="AE000516">
    <property type="protein sequence ID" value="AAK47539.1"/>
    <property type="molecule type" value="Genomic_DNA"/>
</dbReference>
<dbReference type="PIR" id="G70809">
    <property type="entry name" value="G70809"/>
</dbReference>
<dbReference type="RefSeq" id="WP_003404293.1">
    <property type="nucleotide sequence ID" value="NZ_KK341227.1"/>
</dbReference>
<dbReference type="SMR" id="P9WHF8"/>
<dbReference type="KEGG" id="mtc:MT0837"/>
<dbReference type="KEGG" id="mtc:MT3199"/>
<dbReference type="PATRIC" id="fig|83331.31.peg.3449"/>
<dbReference type="HOGENOM" id="CLU_031618_1_3_11"/>
<dbReference type="Proteomes" id="UP000001020">
    <property type="component" value="Chromosome"/>
</dbReference>
<dbReference type="GO" id="GO:0004792">
    <property type="term" value="F:thiosulfate-cyanide sulfurtransferase activity"/>
    <property type="evidence" value="ECO:0007669"/>
    <property type="project" value="UniProtKB-EC"/>
</dbReference>
<dbReference type="CDD" id="cd01448">
    <property type="entry name" value="TST_Repeat_1"/>
    <property type="match status" value="1"/>
</dbReference>
<dbReference type="CDD" id="cd01449">
    <property type="entry name" value="TST_Repeat_2"/>
    <property type="match status" value="1"/>
</dbReference>
<dbReference type="FunFam" id="3.40.250.10:FF:000024">
    <property type="entry name" value="Sulfurtransferase"/>
    <property type="match status" value="1"/>
</dbReference>
<dbReference type="Gene3D" id="3.40.250.10">
    <property type="entry name" value="Rhodanese-like domain"/>
    <property type="match status" value="2"/>
</dbReference>
<dbReference type="InterPro" id="IPR001763">
    <property type="entry name" value="Rhodanese-like_dom"/>
</dbReference>
<dbReference type="InterPro" id="IPR036873">
    <property type="entry name" value="Rhodanese-like_dom_sf"/>
</dbReference>
<dbReference type="InterPro" id="IPR051126">
    <property type="entry name" value="Thiosulfate_sulfurtransferase"/>
</dbReference>
<dbReference type="InterPro" id="IPR001307">
    <property type="entry name" value="Thiosulphate_STrfase_CS"/>
</dbReference>
<dbReference type="PANTHER" id="PTHR43855">
    <property type="entry name" value="THIOSULFATE SULFURTRANSFERASE"/>
    <property type="match status" value="1"/>
</dbReference>
<dbReference type="PANTHER" id="PTHR43855:SF1">
    <property type="entry name" value="THIOSULFATE SULFURTRANSFERASE"/>
    <property type="match status" value="1"/>
</dbReference>
<dbReference type="Pfam" id="PF00581">
    <property type="entry name" value="Rhodanese"/>
    <property type="match status" value="2"/>
</dbReference>
<dbReference type="SMART" id="SM00450">
    <property type="entry name" value="RHOD"/>
    <property type="match status" value="2"/>
</dbReference>
<dbReference type="SUPFAM" id="SSF52821">
    <property type="entry name" value="Rhodanese/Cell cycle control phosphatase"/>
    <property type="match status" value="2"/>
</dbReference>
<dbReference type="PROSITE" id="PS00683">
    <property type="entry name" value="RHODANESE_2"/>
    <property type="match status" value="1"/>
</dbReference>
<dbReference type="PROSITE" id="PS50206">
    <property type="entry name" value="RHODANESE_3"/>
    <property type="match status" value="2"/>
</dbReference>
<proteinExistence type="inferred from homology"/>
<protein>
    <recommendedName>
        <fullName>Putative thiosulfate sulfurtransferase</fullName>
        <ecNumber>2.8.1.1</ecNumber>
    </recommendedName>
    <alternativeName>
        <fullName>Rhodanese-like protein</fullName>
    </alternativeName>
</protein>
<sequence>MARCDVLVSADWAESNLHAPKVVFVEVDEDTSAYDRDHIAGAIKLDWRTDLQDPVKRDFVDAQQFSKLLSERGIANEDTVILYGGNNNWFAAYAYWYFKLYGHEKVKLLDGGRKKWELDGRPLSSDPVSRPVTSYTASPPDNTIRAFRDEVLAAINVKNLIDVRSPDEFSGKILAPAHLPQEQSQRPGHIPGAINVPWSRAANEDGTFKSDEELAKLYADAGLDNSKETIAYCRIGERSSHTWFVLRELLGHQNVKNYDGSWTEYGSLVGAPIELGS</sequence>
<accession>P9WHF8</accession>
<accession>L0TBW4</accession>
<accession>O05793</accession>
<keyword id="KW-1185">Reference proteome</keyword>
<keyword id="KW-0677">Repeat</keyword>
<keyword id="KW-0808">Transferase</keyword>
<gene>
    <name type="primary">cysA1</name>
    <name type="synonym">cysA</name>
    <name type="ordered locus">MT3199</name>
</gene>
<gene>
    <name type="primary">cysA2</name>
    <name type="ordered locus">MT0837</name>
</gene>
<reference key="1">
    <citation type="journal article" date="2002" name="J. Bacteriol.">
        <title>Whole-genome comparison of Mycobacterium tuberculosis clinical and laboratory strains.</title>
        <authorList>
            <person name="Fleischmann R.D."/>
            <person name="Alland D."/>
            <person name="Eisen J.A."/>
            <person name="Carpenter L."/>
            <person name="White O."/>
            <person name="Peterson J.D."/>
            <person name="DeBoy R.T."/>
            <person name="Dodson R.J."/>
            <person name="Gwinn M.L."/>
            <person name="Haft D.H."/>
            <person name="Hickey E.K."/>
            <person name="Kolonay J.F."/>
            <person name="Nelson W.C."/>
            <person name="Umayam L.A."/>
            <person name="Ermolaeva M.D."/>
            <person name="Salzberg S.L."/>
            <person name="Delcher A."/>
            <person name="Utterback T.R."/>
            <person name="Weidman J.F."/>
            <person name="Khouri H.M."/>
            <person name="Gill J."/>
            <person name="Mikula A."/>
            <person name="Bishai W."/>
            <person name="Jacobs W.R. Jr."/>
            <person name="Venter J.C."/>
            <person name="Fraser C.M."/>
        </authorList>
    </citation>
    <scope>NUCLEOTIDE SEQUENCE [LARGE SCALE GENOMIC DNA]</scope>
    <source>
        <strain>CDC 1551 / Oshkosh</strain>
    </source>
</reference>
<feature type="chain" id="PRO_0000428194" description="Putative thiosulfate sulfurtransferase">
    <location>
        <begin position="1"/>
        <end position="277"/>
    </location>
</feature>
<feature type="domain" description="Rhodanese 1" evidence="2">
    <location>
        <begin position="18"/>
        <end position="125"/>
    </location>
</feature>
<feature type="domain" description="Rhodanese 2" evidence="2">
    <location>
        <begin position="154"/>
        <end position="274"/>
    </location>
</feature>
<feature type="active site" description="Cysteine persulfide intermediate" evidence="2">
    <location>
        <position position="233"/>
    </location>
</feature>
<feature type="binding site" evidence="1">
    <location>
        <position position="238"/>
    </location>
    <ligand>
        <name>substrate</name>
    </ligand>
</feature>